<organism>
    <name type="scientific">Kluyveromyces lactis (strain ATCC 8585 / CBS 2359 / DSM 70799 / NBRC 1267 / NRRL Y-1140 / WM37)</name>
    <name type="common">Yeast</name>
    <name type="synonym">Candida sphaerica</name>
    <dbReference type="NCBI Taxonomy" id="284590"/>
    <lineage>
        <taxon>Eukaryota</taxon>
        <taxon>Fungi</taxon>
        <taxon>Dikarya</taxon>
        <taxon>Ascomycota</taxon>
        <taxon>Saccharomycotina</taxon>
        <taxon>Saccharomycetes</taxon>
        <taxon>Saccharomycetales</taxon>
        <taxon>Saccharomycetaceae</taxon>
        <taxon>Kluyveromyces</taxon>
    </lineage>
</organism>
<accession>Q6CUA5</accession>
<name>PNO1_KLULA</name>
<evidence type="ECO:0000250" key="1"/>
<evidence type="ECO:0000250" key="2">
    <source>
        <dbReference type="UniProtKB" id="Q99216"/>
    </source>
</evidence>
<evidence type="ECO:0000256" key="3">
    <source>
        <dbReference type="SAM" id="MobiDB-lite"/>
    </source>
</evidence>
<evidence type="ECO:0000305" key="4"/>
<comment type="function">
    <text evidence="1">Required for small ribosomal subunit (SSU) synthesis. Has a role in the processing of early nucleolar and late cytoplasmic pre-RNA species (By similarity).</text>
</comment>
<comment type="subunit">
    <text evidence="1">Component of the small ribosomal subunit, ribosomal RNA processing complex (SSU RRP complex).</text>
</comment>
<comment type="subcellular location">
    <subcellularLocation>
        <location evidence="2">Cytoplasm</location>
    </subcellularLocation>
    <subcellularLocation>
        <location evidence="2">Nucleus</location>
        <location evidence="2">Nucleolus</location>
    </subcellularLocation>
</comment>
<comment type="similarity">
    <text evidence="4">Belongs to the PNO1 family.</text>
</comment>
<reference key="1">
    <citation type="journal article" date="2004" name="Nature">
        <title>Genome evolution in yeasts.</title>
        <authorList>
            <person name="Dujon B."/>
            <person name="Sherman D."/>
            <person name="Fischer G."/>
            <person name="Durrens P."/>
            <person name="Casaregola S."/>
            <person name="Lafontaine I."/>
            <person name="de Montigny J."/>
            <person name="Marck C."/>
            <person name="Neuveglise C."/>
            <person name="Talla E."/>
            <person name="Goffard N."/>
            <person name="Frangeul L."/>
            <person name="Aigle M."/>
            <person name="Anthouard V."/>
            <person name="Babour A."/>
            <person name="Barbe V."/>
            <person name="Barnay S."/>
            <person name="Blanchin S."/>
            <person name="Beckerich J.-M."/>
            <person name="Beyne E."/>
            <person name="Bleykasten C."/>
            <person name="Boisrame A."/>
            <person name="Boyer J."/>
            <person name="Cattolico L."/>
            <person name="Confanioleri F."/>
            <person name="de Daruvar A."/>
            <person name="Despons L."/>
            <person name="Fabre E."/>
            <person name="Fairhead C."/>
            <person name="Ferry-Dumazet H."/>
            <person name="Groppi A."/>
            <person name="Hantraye F."/>
            <person name="Hennequin C."/>
            <person name="Jauniaux N."/>
            <person name="Joyet P."/>
            <person name="Kachouri R."/>
            <person name="Kerrest A."/>
            <person name="Koszul R."/>
            <person name="Lemaire M."/>
            <person name="Lesur I."/>
            <person name="Ma L."/>
            <person name="Muller H."/>
            <person name="Nicaud J.-M."/>
            <person name="Nikolski M."/>
            <person name="Oztas S."/>
            <person name="Ozier-Kalogeropoulos O."/>
            <person name="Pellenz S."/>
            <person name="Potier S."/>
            <person name="Richard G.-F."/>
            <person name="Straub M.-L."/>
            <person name="Suleau A."/>
            <person name="Swennen D."/>
            <person name="Tekaia F."/>
            <person name="Wesolowski-Louvel M."/>
            <person name="Westhof E."/>
            <person name="Wirth B."/>
            <person name="Zeniou-Meyer M."/>
            <person name="Zivanovic Y."/>
            <person name="Bolotin-Fukuhara M."/>
            <person name="Thierry A."/>
            <person name="Bouchier C."/>
            <person name="Caudron B."/>
            <person name="Scarpelli C."/>
            <person name="Gaillardin C."/>
            <person name="Weissenbach J."/>
            <person name="Wincker P."/>
            <person name="Souciet J.-L."/>
        </authorList>
    </citation>
    <scope>NUCLEOTIDE SEQUENCE [LARGE SCALE GENOMIC DNA]</scope>
    <source>
        <strain>ATCC 8585 / CBS 2359 / DSM 70799 / NBRC 1267 / NRRL Y-1140 / WM37</strain>
    </source>
</reference>
<gene>
    <name type="primary">PNO1</name>
    <name type="ordered locus">KLLA0C06446g</name>
</gene>
<protein>
    <recommendedName>
        <fullName>Pre-rRNA-processing protein PNO1</fullName>
    </recommendedName>
</protein>
<keyword id="KW-0963">Cytoplasm</keyword>
<keyword id="KW-0539">Nucleus</keyword>
<keyword id="KW-1185">Reference proteome</keyword>
<keyword id="KW-0690">Ribosome biogenesis</keyword>
<keyword id="KW-0694">RNA-binding</keyword>
<dbReference type="EMBL" id="CR382123">
    <property type="protein sequence ID" value="CAH01335.1"/>
    <property type="molecule type" value="Genomic_DNA"/>
</dbReference>
<dbReference type="RefSeq" id="XP_452484.1">
    <property type="nucleotide sequence ID" value="XM_452484.1"/>
</dbReference>
<dbReference type="SMR" id="Q6CUA5"/>
<dbReference type="FunCoup" id="Q6CUA5">
    <property type="interactions" value="995"/>
</dbReference>
<dbReference type="STRING" id="284590.Q6CUA5"/>
<dbReference type="PaxDb" id="284590-Q6CUA5"/>
<dbReference type="KEGG" id="kla:KLLA0_C06446g"/>
<dbReference type="eggNOG" id="KOG3273">
    <property type="taxonomic scope" value="Eukaryota"/>
</dbReference>
<dbReference type="HOGENOM" id="CLU_064992_0_2_1"/>
<dbReference type="InParanoid" id="Q6CUA5"/>
<dbReference type="OMA" id="TPLRNNW"/>
<dbReference type="Proteomes" id="UP000000598">
    <property type="component" value="Chromosome C"/>
</dbReference>
<dbReference type="GO" id="GO:0005737">
    <property type="term" value="C:cytoplasm"/>
    <property type="evidence" value="ECO:0007669"/>
    <property type="project" value="UniProtKB-SubCell"/>
</dbReference>
<dbReference type="GO" id="GO:0005730">
    <property type="term" value="C:nucleolus"/>
    <property type="evidence" value="ECO:0007669"/>
    <property type="project" value="UniProtKB-SubCell"/>
</dbReference>
<dbReference type="GO" id="GO:0003723">
    <property type="term" value="F:RNA binding"/>
    <property type="evidence" value="ECO:0007669"/>
    <property type="project" value="UniProtKB-KW"/>
</dbReference>
<dbReference type="GO" id="GO:0042254">
    <property type="term" value="P:ribosome biogenesis"/>
    <property type="evidence" value="ECO:0007669"/>
    <property type="project" value="UniProtKB-KW"/>
</dbReference>
<dbReference type="CDD" id="cd22391">
    <property type="entry name" value="KH-I_PNO1_rpt1"/>
    <property type="match status" value="1"/>
</dbReference>
<dbReference type="CDD" id="cd22392">
    <property type="entry name" value="KH-I_PNO1_rpt2"/>
    <property type="match status" value="1"/>
</dbReference>
<dbReference type="FunFam" id="3.30.1370.10:FF:000009">
    <property type="entry name" value="RNA-binding protein PNO1"/>
    <property type="match status" value="1"/>
</dbReference>
<dbReference type="Gene3D" id="3.30.1370.10">
    <property type="entry name" value="K Homology domain, type 1"/>
    <property type="match status" value="1"/>
</dbReference>
<dbReference type="InterPro" id="IPR055212">
    <property type="entry name" value="KH-I_PNO1_first"/>
</dbReference>
<dbReference type="InterPro" id="IPR036612">
    <property type="entry name" value="KH_dom_type_1_sf"/>
</dbReference>
<dbReference type="InterPro" id="IPR055211">
    <property type="entry name" value="KH_PNO1_2nd"/>
</dbReference>
<dbReference type="PANTHER" id="PTHR12826">
    <property type="entry name" value="RIBONUCLEASE Y"/>
    <property type="match status" value="1"/>
</dbReference>
<dbReference type="PANTHER" id="PTHR12826:SF13">
    <property type="entry name" value="RNA-BINDING PROTEIN PNO1"/>
    <property type="match status" value="1"/>
</dbReference>
<dbReference type="Pfam" id="PF22891">
    <property type="entry name" value="KH_PNO1_2nd"/>
    <property type="match status" value="1"/>
</dbReference>
<dbReference type="SUPFAM" id="SSF54791">
    <property type="entry name" value="Eukaryotic type KH-domain (KH-domain type I)"/>
    <property type="match status" value="1"/>
</dbReference>
<sequence length="274" mass="30241">MVAPTALKKSDVSEGTVPVTTTSRIVGVDNTEKIDEDDDDADVLIDQDGDAMLVDEENNEESNKKKEDAGVVLDAEGKPRFTSAASSAQTKVKLESRKVSVPPHRMTPLKNNWSKIYPPLVDHLKLQVRMNLKTKSVELRTHPKHTTDPGALQKGADFIKAFTLGFDLDDSIALLRLDDLYIETFEIKDVKTLQGDHLSRAIGRIAGKDGKTKFAIENATRTRIVLADSKIHILGGFTHIRMARESVVSLILGSPPGKVYGNLRTVASRLKERY</sequence>
<feature type="chain" id="PRO_0000278372" description="Pre-rRNA-processing protein PNO1">
    <location>
        <begin position="1"/>
        <end position="274"/>
    </location>
</feature>
<feature type="domain" description="KH">
    <location>
        <begin position="195"/>
        <end position="247"/>
    </location>
</feature>
<feature type="region of interest" description="Disordered" evidence="3">
    <location>
        <begin position="1"/>
        <end position="39"/>
    </location>
</feature>
<proteinExistence type="inferred from homology"/>